<name>NCBP1_HUMAN</name>
<protein>
    <recommendedName>
        <fullName>Nuclear cap-binding protein subunit 1</fullName>
    </recommendedName>
    <alternativeName>
        <fullName>80 kDa nuclear cap-binding protein</fullName>
        <shortName>CBP80</shortName>
        <shortName>NCBP 80 kDa subunit</shortName>
    </alternativeName>
</protein>
<evidence type="ECO:0000250" key="1">
    <source>
        <dbReference type="UniProtKB" id="Q3UYV9"/>
    </source>
</evidence>
<evidence type="ECO:0000255" key="2"/>
<evidence type="ECO:0000256" key="3">
    <source>
        <dbReference type="SAM" id="MobiDB-lite"/>
    </source>
</evidence>
<evidence type="ECO:0000269" key="4">
    <source>
    </source>
</evidence>
<evidence type="ECO:0000269" key="5">
    <source>
    </source>
</evidence>
<evidence type="ECO:0000269" key="6">
    <source>
    </source>
</evidence>
<evidence type="ECO:0000269" key="7">
    <source>
    </source>
</evidence>
<evidence type="ECO:0000269" key="8">
    <source>
    </source>
</evidence>
<evidence type="ECO:0000269" key="9">
    <source>
    </source>
</evidence>
<evidence type="ECO:0000269" key="10">
    <source>
    </source>
</evidence>
<evidence type="ECO:0000269" key="11">
    <source>
    </source>
</evidence>
<evidence type="ECO:0000269" key="12">
    <source>
    </source>
</evidence>
<evidence type="ECO:0000269" key="13">
    <source>
    </source>
</evidence>
<evidence type="ECO:0000269" key="14">
    <source>
    </source>
</evidence>
<evidence type="ECO:0000269" key="15">
    <source>
    </source>
</evidence>
<evidence type="ECO:0000269" key="16">
    <source>
    </source>
</evidence>
<evidence type="ECO:0000269" key="17">
    <source>
    </source>
</evidence>
<evidence type="ECO:0000269" key="18">
    <source>
    </source>
</evidence>
<evidence type="ECO:0000269" key="19">
    <source>
    </source>
</evidence>
<evidence type="ECO:0000269" key="20">
    <source>
    </source>
</evidence>
<evidence type="ECO:0000269" key="21">
    <source>
    </source>
</evidence>
<evidence type="ECO:0000269" key="22">
    <source>
    </source>
</evidence>
<evidence type="ECO:0000269" key="23">
    <source>
    </source>
</evidence>
<evidence type="ECO:0000269" key="24">
    <source>
    </source>
</evidence>
<evidence type="ECO:0000269" key="25">
    <source>
    </source>
</evidence>
<evidence type="ECO:0000269" key="26">
    <source>
    </source>
</evidence>
<evidence type="ECO:0000269" key="27">
    <source>
    </source>
</evidence>
<evidence type="ECO:0000269" key="28">
    <source>
    </source>
</evidence>
<evidence type="ECO:0000269" key="29">
    <source>
    </source>
</evidence>
<evidence type="ECO:0000269" key="30">
    <source>
    </source>
</evidence>
<evidence type="ECO:0000305" key="31"/>
<evidence type="ECO:0007744" key="32">
    <source>
    </source>
</evidence>
<evidence type="ECO:0007744" key="33">
    <source>
    </source>
</evidence>
<evidence type="ECO:0007744" key="34">
    <source>
    </source>
</evidence>
<evidence type="ECO:0007744" key="35">
    <source>
    </source>
</evidence>
<evidence type="ECO:0007744" key="36">
    <source>
    </source>
</evidence>
<evidence type="ECO:0007829" key="37">
    <source>
        <dbReference type="PDB" id="1H2T"/>
    </source>
</evidence>
<evidence type="ECO:0007829" key="38">
    <source>
        <dbReference type="PDB" id="1H2U"/>
    </source>
</evidence>
<evidence type="ECO:0007829" key="39">
    <source>
        <dbReference type="PDB" id="1H2V"/>
    </source>
</evidence>
<evidence type="ECO:0007829" key="40">
    <source>
        <dbReference type="PDB" id="1H6K"/>
    </source>
</evidence>
<evidence type="ECO:0007829" key="41">
    <source>
        <dbReference type="PDB" id="1N52"/>
    </source>
</evidence>
<evidence type="ECO:0007829" key="42">
    <source>
        <dbReference type="PDB" id="1N54"/>
    </source>
</evidence>
<evidence type="ECO:0007829" key="43">
    <source>
        <dbReference type="PDB" id="6D0Y"/>
    </source>
</evidence>
<evidence type="ECO:0007829" key="44">
    <source>
        <dbReference type="PDB" id="8SRR"/>
    </source>
</evidence>
<dbReference type="EMBL" id="X80030">
    <property type="protein sequence ID" value="CAA56334.1"/>
    <property type="molecule type" value="mRNA"/>
</dbReference>
<dbReference type="EMBL" id="D32002">
    <property type="protein sequence ID" value="BAA06769.1"/>
    <property type="molecule type" value="mRNA"/>
</dbReference>
<dbReference type="EMBL" id="AK312807">
    <property type="protein sequence ID" value="BAG35665.1"/>
    <property type="molecule type" value="mRNA"/>
</dbReference>
<dbReference type="EMBL" id="AB209233">
    <property type="protein sequence ID" value="BAD92470.1"/>
    <property type="status" value="ALT_INIT"/>
    <property type="molecule type" value="mRNA"/>
</dbReference>
<dbReference type="EMBL" id="AL162385">
    <property type="status" value="NOT_ANNOTATED_CDS"/>
    <property type="molecule type" value="Genomic_DNA"/>
</dbReference>
<dbReference type="EMBL" id="AL445531">
    <property type="status" value="NOT_ANNOTATED_CDS"/>
    <property type="molecule type" value="Genomic_DNA"/>
</dbReference>
<dbReference type="EMBL" id="BC001450">
    <property type="protein sequence ID" value="AAH01450.1"/>
    <property type="molecule type" value="mRNA"/>
</dbReference>
<dbReference type="CCDS" id="CCDS6728.1"/>
<dbReference type="PIR" id="S50082">
    <property type="entry name" value="S50082"/>
</dbReference>
<dbReference type="RefSeq" id="NP_002477.1">
    <property type="nucleotide sequence ID" value="NM_002486.5"/>
</dbReference>
<dbReference type="PDB" id="1H2T">
    <property type="method" value="X-ray"/>
    <property type="resolution" value="2.10 A"/>
    <property type="chains" value="C=20-652, C=702-790"/>
</dbReference>
<dbReference type="PDB" id="1H2U">
    <property type="method" value="X-ray"/>
    <property type="resolution" value="2.40 A"/>
    <property type="chains" value="A/B=20-652, A/B=702-790"/>
</dbReference>
<dbReference type="PDB" id="1H2V">
    <property type="method" value="X-ray"/>
    <property type="resolution" value="2.00 A"/>
    <property type="chains" value="C=20-790"/>
</dbReference>
<dbReference type="PDB" id="1H6K">
    <property type="method" value="X-ray"/>
    <property type="resolution" value="2.00 A"/>
    <property type="chains" value="A/B/C=20-790"/>
</dbReference>
<dbReference type="PDB" id="1N52">
    <property type="method" value="X-ray"/>
    <property type="resolution" value="2.11 A"/>
    <property type="chains" value="A=1-790"/>
</dbReference>
<dbReference type="PDB" id="1N54">
    <property type="method" value="X-ray"/>
    <property type="resolution" value="2.72 A"/>
    <property type="chains" value="A=1-790"/>
</dbReference>
<dbReference type="PDB" id="3FEX">
    <property type="method" value="X-ray"/>
    <property type="resolution" value="3.55 A"/>
    <property type="chains" value="A=1-790"/>
</dbReference>
<dbReference type="PDB" id="3FEY">
    <property type="method" value="X-ray"/>
    <property type="resolution" value="2.20 A"/>
    <property type="chains" value="A=1-790"/>
</dbReference>
<dbReference type="PDB" id="5OO6">
    <property type="method" value="X-ray"/>
    <property type="resolution" value="2.80 A"/>
    <property type="chains" value="A/D/G/J/M/P/S/V=20-790"/>
</dbReference>
<dbReference type="PDB" id="5OOB">
    <property type="method" value="X-ray"/>
    <property type="resolution" value="2.79 A"/>
    <property type="chains" value="A/C/F/I=20-790"/>
</dbReference>
<dbReference type="PDB" id="6D0Y">
    <property type="method" value="X-ray"/>
    <property type="resolution" value="2.68 A"/>
    <property type="chains" value="C=24-790"/>
</dbReference>
<dbReference type="PDB" id="7ABG">
    <property type="method" value="EM"/>
    <property type="resolution" value="7.80 A"/>
    <property type="chains" value="A5=1-790"/>
</dbReference>
<dbReference type="PDB" id="8BY6">
    <property type="method" value="EM"/>
    <property type="resolution" value="3.19 A"/>
    <property type="chains" value="A=20-790"/>
</dbReference>
<dbReference type="PDB" id="8PMP">
    <property type="method" value="EM"/>
    <property type="resolution" value="3.43 A"/>
    <property type="chains" value="A=20-790"/>
</dbReference>
<dbReference type="PDB" id="8PNT">
    <property type="method" value="EM"/>
    <property type="resolution" value="3.46 A"/>
    <property type="chains" value="A=20-790"/>
</dbReference>
<dbReference type="PDB" id="8SRR">
    <property type="method" value="EM"/>
    <property type="resolution" value="3.22 A"/>
    <property type="chains" value="A=1-790"/>
</dbReference>
<dbReference type="PDB" id="8SUY">
    <property type="method" value="EM"/>
    <property type="resolution" value="3.38 A"/>
    <property type="chains" value="A=1-790"/>
</dbReference>
<dbReference type="PDBsum" id="1H2T"/>
<dbReference type="PDBsum" id="1H2U"/>
<dbReference type="PDBsum" id="1H2V"/>
<dbReference type="PDBsum" id="1H6K"/>
<dbReference type="PDBsum" id="1N52"/>
<dbReference type="PDBsum" id="1N54"/>
<dbReference type="PDBsum" id="3FEX"/>
<dbReference type="PDBsum" id="3FEY"/>
<dbReference type="PDBsum" id="5OO6"/>
<dbReference type="PDBsum" id="5OOB"/>
<dbReference type="PDBsum" id="6D0Y"/>
<dbReference type="PDBsum" id="7ABG"/>
<dbReference type="PDBsum" id="8BY6"/>
<dbReference type="PDBsum" id="8PMP"/>
<dbReference type="PDBsum" id="8PNT"/>
<dbReference type="PDBsum" id="8SRR"/>
<dbReference type="PDBsum" id="8SUY"/>
<dbReference type="EMDB" id="EMD-11695"/>
<dbReference type="EMDB" id="EMD-16321"/>
<dbReference type="EMDB" id="EMD-17763"/>
<dbReference type="EMDB" id="EMD-17784"/>
<dbReference type="EMDB" id="EMD-40739"/>
<dbReference type="EMDB" id="EMD-40780"/>
<dbReference type="SMR" id="Q09161"/>
<dbReference type="BioGRID" id="110766">
    <property type="interactions" value="375"/>
</dbReference>
<dbReference type="ComplexPortal" id="CPX-1427">
    <property type="entry name" value="Nuclear cap-binding complex"/>
</dbReference>
<dbReference type="ComplexPortal" id="CPX-3624">
    <property type="entry name" value="Alternative nuclear cap-binding complex"/>
</dbReference>
<dbReference type="CORUM" id="Q09161"/>
<dbReference type="DIP" id="DIP-33244N"/>
<dbReference type="FunCoup" id="Q09161">
    <property type="interactions" value="4100"/>
</dbReference>
<dbReference type="IntAct" id="Q09161">
    <property type="interactions" value="340"/>
</dbReference>
<dbReference type="MINT" id="Q09161"/>
<dbReference type="STRING" id="9606.ENSP00000364289"/>
<dbReference type="ChEMBL" id="CHEMBL4665589"/>
<dbReference type="TCDB" id="9.A.60.1.1">
    <property type="family name" value="the small nuclear rna exporter (snrna-e) family"/>
</dbReference>
<dbReference type="GlyCosmos" id="Q09161">
    <property type="glycosylation" value="2 sites, 1 glycan"/>
</dbReference>
<dbReference type="GlyGen" id="Q09161">
    <property type="glycosylation" value="3 sites, 1 N-linked glycan (1 site), 1 O-linked glycan (2 sites)"/>
</dbReference>
<dbReference type="iPTMnet" id="Q09161"/>
<dbReference type="MetOSite" id="Q09161"/>
<dbReference type="PhosphoSitePlus" id="Q09161"/>
<dbReference type="SwissPalm" id="Q09161"/>
<dbReference type="BioMuta" id="NCBP1"/>
<dbReference type="DMDM" id="1705654"/>
<dbReference type="jPOST" id="Q09161"/>
<dbReference type="MassIVE" id="Q09161"/>
<dbReference type="PaxDb" id="9606-ENSP00000364289"/>
<dbReference type="PeptideAtlas" id="Q09161"/>
<dbReference type="ProteomicsDB" id="58717"/>
<dbReference type="Pumba" id="Q09161"/>
<dbReference type="Antibodypedia" id="28868">
    <property type="antibodies" value="234 antibodies from 34 providers"/>
</dbReference>
<dbReference type="DNASU" id="4686"/>
<dbReference type="Ensembl" id="ENST00000375147.8">
    <property type="protein sequence ID" value="ENSP00000364289.3"/>
    <property type="gene ID" value="ENSG00000136937.13"/>
</dbReference>
<dbReference type="GeneID" id="4686"/>
<dbReference type="KEGG" id="hsa:4686"/>
<dbReference type="MANE-Select" id="ENST00000375147.8">
    <property type="protein sequence ID" value="ENSP00000364289.3"/>
    <property type="RefSeq nucleotide sequence ID" value="NM_002486.5"/>
    <property type="RefSeq protein sequence ID" value="NP_002477.1"/>
</dbReference>
<dbReference type="UCSC" id="uc004axq.4">
    <property type="organism name" value="human"/>
</dbReference>
<dbReference type="AGR" id="HGNC:7658"/>
<dbReference type="CTD" id="4686"/>
<dbReference type="DisGeNET" id="4686"/>
<dbReference type="GeneCards" id="NCBP1"/>
<dbReference type="HGNC" id="HGNC:7658">
    <property type="gene designation" value="NCBP1"/>
</dbReference>
<dbReference type="HPA" id="ENSG00000136937">
    <property type="expression patterns" value="Low tissue specificity"/>
</dbReference>
<dbReference type="MIM" id="600469">
    <property type="type" value="gene"/>
</dbReference>
<dbReference type="neXtProt" id="NX_Q09161"/>
<dbReference type="OpenTargets" id="ENSG00000136937"/>
<dbReference type="PharmGKB" id="PA31461"/>
<dbReference type="VEuPathDB" id="HostDB:ENSG00000136937"/>
<dbReference type="eggNOG" id="KOG1104">
    <property type="taxonomic scope" value="Eukaryota"/>
</dbReference>
<dbReference type="GeneTree" id="ENSGT00390000001733"/>
<dbReference type="HOGENOM" id="CLU_013207_0_0_1"/>
<dbReference type="InParanoid" id="Q09161"/>
<dbReference type="OMA" id="CAAEGLM"/>
<dbReference type="OrthoDB" id="10252707at2759"/>
<dbReference type="PAN-GO" id="Q09161">
    <property type="GO annotations" value="8 GO annotations based on evolutionary models"/>
</dbReference>
<dbReference type="PhylomeDB" id="Q09161"/>
<dbReference type="TreeFam" id="TF313400"/>
<dbReference type="PathwayCommons" id="Q09161"/>
<dbReference type="Reactome" id="R-HSA-111367">
    <property type="pathway name" value="SLBP independent Processing of Histone Pre-mRNAs"/>
</dbReference>
<dbReference type="Reactome" id="R-HSA-112382">
    <property type="pathway name" value="Formation of RNA Pol II elongation complex"/>
</dbReference>
<dbReference type="Reactome" id="R-HSA-113418">
    <property type="pathway name" value="Formation of the Early Elongation Complex"/>
</dbReference>
<dbReference type="Reactome" id="R-HSA-159227">
    <property type="pathway name" value="Transport of the SLBP independent Mature mRNA"/>
</dbReference>
<dbReference type="Reactome" id="R-HSA-159230">
    <property type="pathway name" value="Transport of the SLBP Dependant Mature mRNA"/>
</dbReference>
<dbReference type="Reactome" id="R-HSA-159231">
    <property type="pathway name" value="Transport of Mature mRNA Derived from an Intronless Transcript"/>
</dbReference>
<dbReference type="Reactome" id="R-HSA-159236">
    <property type="pathway name" value="Transport of Mature mRNA derived from an Intron-Containing Transcript"/>
</dbReference>
<dbReference type="Reactome" id="R-HSA-167152">
    <property type="pathway name" value="Formation of HIV elongation complex in the absence of HIV Tat"/>
</dbReference>
<dbReference type="Reactome" id="R-HSA-167158">
    <property type="pathway name" value="Formation of the HIV-1 Early Elongation Complex"/>
</dbReference>
<dbReference type="Reactome" id="R-HSA-167200">
    <property type="pathway name" value="Formation of HIV-1 elongation complex containing HIV-1 Tat"/>
</dbReference>
<dbReference type="Reactome" id="R-HSA-167242">
    <property type="pathway name" value="Abortive elongation of HIV-1 transcript in the absence of Tat"/>
</dbReference>
<dbReference type="Reactome" id="R-HSA-191859">
    <property type="pathway name" value="snRNP Assembly"/>
</dbReference>
<dbReference type="Reactome" id="R-HSA-674695">
    <property type="pathway name" value="RNA Polymerase II Pre-transcription Events"/>
</dbReference>
<dbReference type="Reactome" id="R-HSA-6803529">
    <property type="pathway name" value="FGFR2 alternative splicing"/>
</dbReference>
<dbReference type="Reactome" id="R-HSA-6807505">
    <property type="pathway name" value="RNA polymerase II transcribes snRNA genes"/>
</dbReference>
<dbReference type="Reactome" id="R-HSA-72086">
    <property type="pathway name" value="mRNA Capping"/>
</dbReference>
<dbReference type="Reactome" id="R-HSA-72163">
    <property type="pathway name" value="mRNA Splicing - Major Pathway"/>
</dbReference>
<dbReference type="Reactome" id="R-HSA-72165">
    <property type="pathway name" value="mRNA Splicing - Minor Pathway"/>
</dbReference>
<dbReference type="Reactome" id="R-HSA-72187">
    <property type="pathway name" value="mRNA 3'-end processing"/>
</dbReference>
<dbReference type="Reactome" id="R-HSA-72203">
    <property type="pathway name" value="Processing of Capped Intron-Containing Pre-mRNA"/>
</dbReference>
<dbReference type="Reactome" id="R-HSA-73856">
    <property type="pathway name" value="RNA Polymerase II Transcription Termination"/>
</dbReference>
<dbReference type="Reactome" id="R-HSA-77588">
    <property type="pathway name" value="SLBP Dependent Processing of Replication-Dependent Histone Pre-mRNAs"/>
</dbReference>
<dbReference type="Reactome" id="R-HSA-77595">
    <property type="pathway name" value="Processing of Intronless Pre-mRNAs"/>
</dbReference>
<dbReference type="Reactome" id="R-HSA-8851708">
    <property type="pathway name" value="Signaling by FGFR2 IIIa TM"/>
</dbReference>
<dbReference type="Reactome" id="R-HSA-9010553">
    <property type="pathway name" value="Regulation of expression of SLITs and ROBOs"/>
</dbReference>
<dbReference type="Reactome" id="R-HSA-975956">
    <property type="pathway name" value="Nonsense Mediated Decay (NMD) independent of the Exon Junction Complex (EJC)"/>
</dbReference>
<dbReference type="Reactome" id="R-HSA-975957">
    <property type="pathway name" value="Nonsense Mediated Decay (NMD) enhanced by the Exon Junction Complex (EJC)"/>
</dbReference>
<dbReference type="SignaLink" id="Q09161"/>
<dbReference type="SIGNOR" id="Q09161"/>
<dbReference type="BioGRID-ORCS" id="4686">
    <property type="hits" value="826 hits in 1177 CRISPR screens"/>
</dbReference>
<dbReference type="CD-CODE" id="232F8A39">
    <property type="entry name" value="P-body"/>
</dbReference>
<dbReference type="CD-CODE" id="804901D1">
    <property type="entry name" value="Nuclear speckle"/>
</dbReference>
<dbReference type="CD-CODE" id="91857CE7">
    <property type="entry name" value="Nucleolus"/>
</dbReference>
<dbReference type="CD-CODE" id="F85A2E29">
    <property type="entry name" value="IMP1 RNP granule"/>
</dbReference>
<dbReference type="ChiTaRS" id="NCBP1">
    <property type="organism name" value="human"/>
</dbReference>
<dbReference type="EvolutionaryTrace" id="Q09161"/>
<dbReference type="GenomeRNAi" id="4686"/>
<dbReference type="Pharos" id="Q09161">
    <property type="development level" value="Tbio"/>
</dbReference>
<dbReference type="PRO" id="PR:Q09161"/>
<dbReference type="Proteomes" id="UP000005640">
    <property type="component" value="Chromosome 9"/>
</dbReference>
<dbReference type="RNAct" id="Q09161">
    <property type="molecule type" value="protein"/>
</dbReference>
<dbReference type="Bgee" id="ENSG00000136937">
    <property type="expression patterns" value="Expressed in sural nerve and 166 other cell types or tissues"/>
</dbReference>
<dbReference type="ExpressionAtlas" id="Q09161">
    <property type="expression patterns" value="baseline and differential"/>
</dbReference>
<dbReference type="GO" id="GO:0005737">
    <property type="term" value="C:cytoplasm"/>
    <property type="evidence" value="ECO:0000314"/>
    <property type="project" value="ComplexPortal"/>
</dbReference>
<dbReference type="GO" id="GO:0005829">
    <property type="term" value="C:cytosol"/>
    <property type="evidence" value="ECO:0000314"/>
    <property type="project" value="HPA"/>
</dbReference>
<dbReference type="GO" id="GO:0005739">
    <property type="term" value="C:mitochondrion"/>
    <property type="evidence" value="ECO:0000314"/>
    <property type="project" value="HPA"/>
</dbReference>
<dbReference type="GO" id="GO:0005846">
    <property type="term" value="C:nuclear cap binding complex"/>
    <property type="evidence" value="ECO:0000314"/>
    <property type="project" value="UniProtKB"/>
</dbReference>
<dbReference type="GO" id="GO:0005654">
    <property type="term" value="C:nucleoplasm"/>
    <property type="evidence" value="ECO:0000314"/>
    <property type="project" value="HPA"/>
</dbReference>
<dbReference type="GO" id="GO:0005634">
    <property type="term" value="C:nucleus"/>
    <property type="evidence" value="ECO:0000314"/>
    <property type="project" value="UniProtKB"/>
</dbReference>
<dbReference type="GO" id="GO:1990904">
    <property type="term" value="C:ribonucleoprotein complex"/>
    <property type="evidence" value="ECO:0000314"/>
    <property type="project" value="UniProtKB"/>
</dbReference>
<dbReference type="GO" id="GO:0034518">
    <property type="term" value="C:RNA cap binding complex"/>
    <property type="evidence" value="ECO:0000315"/>
    <property type="project" value="CAFA"/>
</dbReference>
<dbReference type="GO" id="GO:0060090">
    <property type="term" value="F:molecular adaptor activity"/>
    <property type="evidence" value="ECO:0000269"/>
    <property type="project" value="DisProt"/>
</dbReference>
<dbReference type="GO" id="GO:0003729">
    <property type="term" value="F:mRNA binding"/>
    <property type="evidence" value="ECO:0000318"/>
    <property type="project" value="GO_Central"/>
</dbReference>
<dbReference type="GO" id="GO:0000340">
    <property type="term" value="F:RNA 7-methylguanosine cap binding"/>
    <property type="evidence" value="ECO:0000315"/>
    <property type="project" value="CAFA"/>
</dbReference>
<dbReference type="GO" id="GO:0003723">
    <property type="term" value="F:RNA binding"/>
    <property type="evidence" value="ECO:0007005"/>
    <property type="project" value="UniProtKB"/>
</dbReference>
<dbReference type="GO" id="GO:0000339">
    <property type="term" value="F:RNA cap binding"/>
    <property type="evidence" value="ECO:0000318"/>
    <property type="project" value="GO_Central"/>
</dbReference>
<dbReference type="GO" id="GO:0006370">
    <property type="term" value="P:7-methylguanosine mRNA capping"/>
    <property type="evidence" value="ECO:0000314"/>
    <property type="project" value="UniProtKB"/>
</dbReference>
<dbReference type="GO" id="GO:0000380">
    <property type="term" value="P:alternative mRNA splicing, via spliceosome"/>
    <property type="evidence" value="ECO:0000303"/>
    <property type="project" value="ComplexPortal"/>
</dbReference>
<dbReference type="GO" id="GO:0002191">
    <property type="term" value="P:cap-dependent translational initiation"/>
    <property type="evidence" value="ECO:0000303"/>
    <property type="project" value="ComplexPortal"/>
</dbReference>
<dbReference type="GO" id="GO:0051607">
    <property type="term" value="P:defense response to virus"/>
    <property type="evidence" value="ECO:0000315"/>
    <property type="project" value="ComplexPortal"/>
</dbReference>
<dbReference type="GO" id="GO:0008334">
    <property type="term" value="P:histone mRNA metabolic process"/>
    <property type="evidence" value="ECO:0000315"/>
    <property type="project" value="ComplexPortal"/>
</dbReference>
<dbReference type="GO" id="GO:0035195">
    <property type="term" value="P:miRNA-mediated post-transcriptional gene silencing"/>
    <property type="evidence" value="ECO:0000303"/>
    <property type="project" value="ComplexPortal"/>
</dbReference>
<dbReference type="GO" id="GO:0031124">
    <property type="term" value="P:mRNA 3'-end processing"/>
    <property type="evidence" value="ECO:0000303"/>
    <property type="project" value="ComplexPortal"/>
</dbReference>
<dbReference type="GO" id="GO:0006406">
    <property type="term" value="P:mRNA export from nucleus"/>
    <property type="evidence" value="ECO:0000315"/>
    <property type="project" value="UniProtKB"/>
</dbReference>
<dbReference type="GO" id="GO:0016071">
    <property type="term" value="P:mRNA metabolic process"/>
    <property type="evidence" value="ECO:0000315"/>
    <property type="project" value="UniProtKB"/>
</dbReference>
<dbReference type="GO" id="GO:0000398">
    <property type="term" value="P:mRNA splicing, via spliceosome"/>
    <property type="evidence" value="ECO:0000303"/>
    <property type="project" value="ComplexPortal"/>
</dbReference>
<dbReference type="GO" id="GO:0042789">
    <property type="term" value="P:mRNA transcription by RNA polymerase II"/>
    <property type="evidence" value="ECO:0000314"/>
    <property type="project" value="ComplexPortal"/>
</dbReference>
<dbReference type="GO" id="GO:0000184">
    <property type="term" value="P:nuclear-transcribed mRNA catabolic process, nonsense-mediated decay"/>
    <property type="evidence" value="ECO:0000314"/>
    <property type="project" value="UniProtKB"/>
</dbReference>
<dbReference type="GO" id="GO:0030307">
    <property type="term" value="P:positive regulation of cell growth"/>
    <property type="evidence" value="ECO:0000315"/>
    <property type="project" value="UniProtKB"/>
</dbReference>
<dbReference type="GO" id="GO:0031442">
    <property type="term" value="P:positive regulation of mRNA 3'-end processing"/>
    <property type="evidence" value="ECO:0000315"/>
    <property type="project" value="UniProtKB"/>
</dbReference>
<dbReference type="GO" id="GO:0048026">
    <property type="term" value="P:positive regulation of mRNA splicing, via spliceosome"/>
    <property type="evidence" value="ECO:0000315"/>
    <property type="project" value="CAFA"/>
</dbReference>
<dbReference type="GO" id="GO:1905216">
    <property type="term" value="P:positive regulation of RNA binding"/>
    <property type="evidence" value="ECO:0000315"/>
    <property type="project" value="CAFA"/>
</dbReference>
<dbReference type="GO" id="GO:0032968">
    <property type="term" value="P:positive regulation of transcription elongation by RNA polymerase II"/>
    <property type="evidence" value="ECO:0000303"/>
    <property type="project" value="ComplexPortal"/>
</dbReference>
<dbReference type="GO" id="GO:0031053">
    <property type="term" value="P:primary miRNA processing"/>
    <property type="evidence" value="ECO:0000303"/>
    <property type="project" value="ComplexPortal"/>
</dbReference>
<dbReference type="GO" id="GO:0050684">
    <property type="term" value="P:regulation of mRNA processing"/>
    <property type="evidence" value="ECO:0000318"/>
    <property type="project" value="GO_Central"/>
</dbReference>
<dbReference type="GO" id="GO:0006446">
    <property type="term" value="P:regulation of translational initiation"/>
    <property type="evidence" value="ECO:0000314"/>
    <property type="project" value="UniProtKB"/>
</dbReference>
<dbReference type="GO" id="GO:0035194">
    <property type="term" value="P:regulatory ncRNA-mediated post-transcriptional gene silencing"/>
    <property type="evidence" value="ECO:0000303"/>
    <property type="project" value="ComplexPortal"/>
</dbReference>
<dbReference type="GO" id="GO:0006401">
    <property type="term" value="P:RNA catabolic process"/>
    <property type="evidence" value="ECO:0000315"/>
    <property type="project" value="UniProtKB"/>
</dbReference>
<dbReference type="GO" id="GO:0008380">
    <property type="term" value="P:RNA splicing"/>
    <property type="evidence" value="ECO:0000304"/>
    <property type="project" value="ProtInc"/>
</dbReference>
<dbReference type="GO" id="GO:0006408">
    <property type="term" value="P:snRNA export from nucleus"/>
    <property type="evidence" value="ECO:0000315"/>
    <property type="project" value="ComplexPortal"/>
</dbReference>
<dbReference type="GO" id="GO:0000245">
    <property type="term" value="P:spliceosomal complex assembly"/>
    <property type="evidence" value="ECO:0000315"/>
    <property type="project" value="CAFA"/>
</dbReference>
<dbReference type="DisProt" id="DP00392"/>
<dbReference type="FunFam" id="1.25.40.180:FF:000021">
    <property type="entry name" value="Nuclear cap binding protein subunit 1"/>
    <property type="match status" value="1"/>
</dbReference>
<dbReference type="FunFam" id="1.25.40.180:FF:000010">
    <property type="entry name" value="Nuclear cap-binding protein subunit 1"/>
    <property type="match status" value="1"/>
</dbReference>
<dbReference type="Gene3D" id="1.25.40.180">
    <property type="match status" value="3"/>
</dbReference>
<dbReference type="IDEAL" id="IID00167"/>
<dbReference type="InterPro" id="IPR016024">
    <property type="entry name" value="ARM-type_fold"/>
</dbReference>
<dbReference type="InterPro" id="IPR027159">
    <property type="entry name" value="CBP80"/>
</dbReference>
<dbReference type="InterPro" id="IPR015172">
    <property type="entry name" value="MIF4G-like_typ-1"/>
</dbReference>
<dbReference type="InterPro" id="IPR015174">
    <property type="entry name" value="MIF4G-like_typ-2"/>
</dbReference>
<dbReference type="InterPro" id="IPR003890">
    <property type="entry name" value="MIF4G-like_typ-3"/>
</dbReference>
<dbReference type="PANTHER" id="PTHR12412">
    <property type="entry name" value="CAP BINDING PROTEIN"/>
    <property type="match status" value="1"/>
</dbReference>
<dbReference type="PANTHER" id="PTHR12412:SF2">
    <property type="entry name" value="NUCLEAR CAP-BINDING PROTEIN SUBUNIT 1"/>
    <property type="match status" value="1"/>
</dbReference>
<dbReference type="Pfam" id="PF02854">
    <property type="entry name" value="MIF4G"/>
    <property type="match status" value="1"/>
</dbReference>
<dbReference type="Pfam" id="PF09088">
    <property type="entry name" value="MIF4G_like"/>
    <property type="match status" value="1"/>
</dbReference>
<dbReference type="Pfam" id="PF09090">
    <property type="entry name" value="MIF4G_like_2"/>
    <property type="match status" value="1"/>
</dbReference>
<dbReference type="SMART" id="SM00543">
    <property type="entry name" value="MIF4G"/>
    <property type="match status" value="1"/>
</dbReference>
<dbReference type="SUPFAM" id="SSF48371">
    <property type="entry name" value="ARM repeat"/>
    <property type="match status" value="3"/>
</dbReference>
<keyword id="KW-0002">3D-structure</keyword>
<keyword id="KW-0007">Acetylation</keyword>
<keyword id="KW-0175">Coiled coil</keyword>
<keyword id="KW-0963">Cytoplasm</keyword>
<keyword id="KW-0903">Direct protein sequencing</keyword>
<keyword id="KW-1017">Isopeptide bond</keyword>
<keyword id="KW-0506">mRNA capping</keyword>
<keyword id="KW-0507">mRNA processing</keyword>
<keyword id="KW-0508">mRNA splicing</keyword>
<keyword id="KW-0509">mRNA transport</keyword>
<keyword id="KW-0866">Nonsense-mediated mRNA decay</keyword>
<keyword id="KW-0539">Nucleus</keyword>
<keyword id="KW-0597">Phosphoprotein</keyword>
<keyword id="KW-1267">Proteomics identification</keyword>
<keyword id="KW-1185">Reference proteome</keyword>
<keyword id="KW-0943">RNA-mediated gene silencing</keyword>
<keyword id="KW-0810">Translation regulation</keyword>
<keyword id="KW-0813">Transport</keyword>
<keyword id="KW-0832">Ubl conjugation</keyword>
<proteinExistence type="evidence at protein level"/>
<sequence>MSRRRHSDENDGGQPHKRRKTSDANETEDHLESLICKVGEKSACSLESNLEGLAGVLEADLPNYKSKILRLLCTVARLLPEKLTIYTTLVGLLNARNYNFGGEFVEAMIRQLKESLKANNYNEAVYLVRFLSDLVNCHVIAAPSMVAMFENFVSVTQEEDVPQVRRDWYVYAFLSSLPWVGKELYEKKDAEMDRIFANTESYLKRRQKTHVPMLQVWTADKPHPQEEYLDCLWAQIQKLKKDRWQERHILRPYLAFDSILCEALQHNLPPFTPPPHTEDSVYPMPRVIFRMFDYTDDPEGPVMPGSHSVERFVIEENLHCIIKSHWKERKTCAAQLVSYPGKNKIPLNYHIVEVIFAELFQLPAPPHIDVMYTTLLIELCKLQPGSLPQVLAQATEMLYMRLDTMNTTCVDRFINWFSHHLSNFQFRWSWEDWSDCLSQDPESPKPKFVREVLEKCMRLSYHQRILDIVPPTFSALCPANPTCIYKYGDESSNSLPGHSVALCLAVAFKSKATNDEIFSILKDVPNPNQDDDDDEGFSFNPLKIEVFVQTLLHLAAKSFSHSFSALAKFHEVFKTLAESDEGKLHVLRVMFEVWRNHPQMIAVLVDKMIRTQIVDCAAVANWIFSSELSRDFTRLFVWEILHSTIRKMNKHVLKIQKELEEAKEKLARQHKRRSDDDDRSSDRKDGVLEEQIERLQEKVESAQSEQKNLFLVIFQRFIMILTEHLVRCETDGTSVLTPWYKNCIERLQQIFLQHHQIIQQYMVTLENLLFTAELDPHILAVFQQFCALQA</sequence>
<organism>
    <name type="scientific">Homo sapiens</name>
    <name type="common">Human</name>
    <dbReference type="NCBI Taxonomy" id="9606"/>
    <lineage>
        <taxon>Eukaryota</taxon>
        <taxon>Metazoa</taxon>
        <taxon>Chordata</taxon>
        <taxon>Craniata</taxon>
        <taxon>Vertebrata</taxon>
        <taxon>Euteleostomi</taxon>
        <taxon>Mammalia</taxon>
        <taxon>Eutheria</taxon>
        <taxon>Euarchontoglires</taxon>
        <taxon>Primates</taxon>
        <taxon>Haplorrhini</taxon>
        <taxon>Catarrhini</taxon>
        <taxon>Hominidae</taxon>
        <taxon>Homo</taxon>
    </lineage>
</organism>
<accession>Q09161</accession>
<accession>B2R718</accession>
<accession>Q59G76</accession>
<accession>Q5T1V0</accession>
<accession>Q5T7X2</accession>
<comment type="function">
    <text evidence="7 8 11 12 13 14 15 17 18 20 21 23 28 29">Component of the cap-binding complex (CBC), which binds cotranscriptionally to the 5'-cap of pre-mRNAs and is involved in various processes such as pre-mRNA splicing, translation regulation, nonsense-mediated mRNA decay, RNA-mediated gene silencing (RNAi) by microRNAs (miRNAs) and mRNA export. The CBC complex is involved in mRNA export from the nucleus via its interaction with ALYREF/THOC4/ALY, leading to the recruitment of the mRNA export machinery to the 5'-end of mRNA and to mRNA export in a 5' to 3' direction through the nuclear pore. The CBC complex is also involved in mediating U snRNA and intronless mRNAs export from the nucleus. The CBC complex is essential for a pioneer round of mRNA translation, before steady state translation when the CBC complex is replaced by cytoplasmic cap-binding protein eIF4E. The pioneer round of mRNA translation mediated by the CBC complex plays a central role in nonsense-mediated mRNA decay (NMD), NMD only taking place in mRNAs bound to the CBC complex, but not on eIF4E-bound mRNAs. The CBC complex enhances NMD in mRNAs containing at least one exon-junction complex (EJC) via its interaction with UPF1, promoting the interaction between UPF1 and UPF2. The CBC complex is also involved in 'failsafe' NMD, which is independent of the EJC complex, while it does not participate in Staufen-mediated mRNA decay (SMD). During cell proliferation, the CBC complex is also involved in microRNAs (miRNAs) biogenesis via its interaction with SRRT/ARS2 and is required for miRNA-mediated RNA interference. The CBC complex also acts as a negative regulator of PARN, thereby acting as an inhibitor of mRNA deadenylation. In the CBC complex, NCBP1/CBP80 does not bind directly capped RNAs (m7GpppG-capped RNA) but is required to stabilize the movement of the N-terminal loop of NCBP2/CBP20 and lock the CBC into a high affinity cap-binding state with the cap structure. Associates with NCBP3 to form an alternative cap-binding complex (CBC) which plays a key role in mRNA export and is particularly important in cellular stress situations such as virus infections. The conventional CBC with NCBP2 binds both small nuclear RNA (snRNA) and messenger (mRNA) and is involved in their export from the nucleus whereas the alternative CBC with NCBP3 does not bind snRNA and associates only with mRNA thereby playing a role only in mRNA export. NCBP1/CBP80 is required for cell growth and viability (PubMed:26382858).</text>
</comment>
<comment type="subunit">
    <text evidence="1 5 6 9 10 11 12 13 14 15 16 19 21 22 23 24 25 26 30">Component of the nuclear cap-binding complex (CBC), a heterodimer composed of NCBP1/CBP80 and NCBP2/CBP20 that interacts with m7GpppG-capped RNA. Found in a U snRNA export complex containing PHAX/RNUXA, NCBP1/CBP80, NCBP2/CBP20, RAN, XPO1 and m7G-capped RNA. Identified in a IGF2BP1-dependent mRNP granule complex containing untranslated mRNAs. Interacts with PHAX/RNUXA, SRRT/ARS2, EIF4G2, IGF2BP1, HNRNPF, HNRNPH1, KIAA0427/CTIF, PARN, DROSHA, UPF1 and ALYREF/THOC4. May interact with EIF4G1; the interaction is however controversial since it is reported by PubMed:11340157, PubMed:15059963 and PubMed:15361857, but is not observed by PubMed:19648179. The large PER complex involved in the repression of transcriptional termination is composed of at least PER2, CDK9, DDX5, DHX9, NCBP1/CBP80 and POLR2A. Component of an alternative nuclear cap-binding complex (CBC) composed of NCBP1/CBP80 and NCBP3 (PubMed:26382858). Interacts with METTL3 (PubMed:27117702). Interacts with ZFC3H1 in a RNase-insensitive manner (PubMed:27871484). Interacts with MTREX (PubMed:30842217). Interacts with TASOR (By similarity). Interacts with DHX34; the interaction is RNA-dependent (PubMed:25220460). Interacts with KPNA3 (PubMed:34564892).</text>
</comment>
<comment type="interaction">
    <interactant intactId="EBI-464743">
        <id>Q09161</id>
    </interactant>
    <interactant intactId="EBI-464729">
        <id>P52298</id>
        <label>NCBP2</label>
    </interactant>
    <organismsDiffer>false</organismsDiffer>
    <experiments>54</experiments>
</comment>
<comment type="interaction">
    <interactant intactId="EBI-464743">
        <id>Q09161</id>
    </interactant>
    <interactant intactId="EBI-15798444">
        <id>P52298-1</id>
        <label>NCBP2</label>
    </interactant>
    <organismsDiffer>false</organismsDiffer>
    <experiments>8</experiments>
</comment>
<comment type="interaction">
    <interactant intactId="EBI-464743">
        <id>Q09161</id>
    </interactant>
    <interactant intactId="EBI-6657994">
        <id>Q53F19</id>
        <label>NCBP3</label>
    </interactant>
    <organismsDiffer>false</organismsDiffer>
    <experiments>11</experiments>
</comment>
<comment type="interaction">
    <interactant intactId="EBI-464743">
        <id>Q09161</id>
    </interactant>
    <interactant intactId="EBI-81531">
        <id>P11940</id>
        <label>PABPC1</label>
    </interactant>
    <organismsDiffer>false</organismsDiffer>
    <experiments>9</experiments>
</comment>
<comment type="interaction">
    <interactant intactId="EBI-464743">
        <id>Q09161</id>
    </interactant>
    <interactant intactId="EBI-372832">
        <id>O95453</id>
        <label>PARN</label>
    </interactant>
    <organismsDiffer>false</organismsDiffer>
    <experiments>2</experiments>
</comment>
<comment type="interaction">
    <interactant intactId="EBI-464743">
        <id>Q09161</id>
    </interactant>
    <interactant intactId="EBI-1776152">
        <id>Q9BY77</id>
        <label>POLDIP3</label>
    </interactant>
    <organismsDiffer>false</organismsDiffer>
    <experiments>3</experiments>
</comment>
<comment type="interaction">
    <interactant intactId="EBI-464743">
        <id>Q09161</id>
    </interactant>
    <interactant intactId="EBI-1050964">
        <id>O43586</id>
        <label>PSTPIP1</label>
    </interactant>
    <organismsDiffer>false</organismsDiffer>
    <experiments>3</experiments>
</comment>
<comment type="interaction">
    <interactant intactId="EBI-464743">
        <id>Q09161</id>
    </interactant>
    <interactant intactId="EBI-2372238">
        <id>Q5VTR2</id>
        <label>RNF20</label>
    </interactant>
    <organismsDiffer>false</organismsDiffer>
    <experiments>3</experiments>
</comment>
<comment type="interaction">
    <interactant intactId="EBI-464743">
        <id>Q09161</id>
    </interactant>
    <interactant intactId="EBI-744408">
        <id>O75150</id>
        <label>RNF40</label>
    </interactant>
    <organismsDiffer>false</organismsDiffer>
    <experiments>5</experiments>
</comment>
<comment type="interaction">
    <interactant intactId="EBI-464743">
        <id>Q09161</id>
    </interactant>
    <interactant intactId="EBI-356625">
        <id>P62753</id>
        <label>RPS6</label>
    </interactant>
    <organismsDiffer>false</organismsDiffer>
    <experiments>3</experiments>
</comment>
<comment type="interaction">
    <interactant intactId="EBI-464743">
        <id>Q09161</id>
    </interactant>
    <interactant intactId="EBI-2462271">
        <id>Q15428</id>
        <label>SF3A2</label>
    </interactant>
    <organismsDiffer>false</organismsDiffer>
    <experiments>2</experiments>
</comment>
<comment type="subcellular location">
    <subcellularLocation>
        <location evidence="21">Nucleus</location>
    </subcellularLocation>
    <subcellularLocation>
        <location evidence="16">Cytoplasm</location>
    </subcellularLocation>
    <text evidence="16">Localized in cytoplasmic mRNP granules containing untranslated mRNAs.</text>
</comment>
<comment type="PTM">
    <text evidence="27">Dephosphorylated at Thr-21 by the PNUTS-PP1 complex during RNA polymerase II transcription pause-release.</text>
</comment>
<comment type="similarity">
    <text evidence="31">Belongs to the NCBP1 family.</text>
</comment>
<comment type="sequence caution" evidence="31">
    <conflict type="erroneous initiation">
        <sequence resource="EMBL-CDS" id="BAD92470"/>
    </conflict>
    <text>Extended N-terminus.</text>
</comment>
<feature type="chain" id="PRO_0000089364" description="Nuclear cap-binding protein subunit 1">
    <location>
        <begin position="1"/>
        <end position="790"/>
    </location>
</feature>
<feature type="domain" description="MIF4G">
    <location>
        <begin position="28"/>
        <end position="240"/>
    </location>
</feature>
<feature type="region of interest" description="Disordered" evidence="3">
    <location>
        <begin position="1"/>
        <end position="26"/>
    </location>
</feature>
<feature type="coiled-coil region" evidence="2">
    <location>
        <begin position="643"/>
        <end position="713"/>
    </location>
</feature>
<feature type="short sequence motif" description="Nuclear localization signal" evidence="2">
    <location>
        <begin position="3"/>
        <end position="20"/>
    </location>
</feature>
<feature type="modified residue" description="Phosphoserine; by RPS6KB1" evidence="4">
    <location>
        <position position="7"/>
    </location>
</feature>
<feature type="modified residue" description="Phosphothreonine; by RPS6KB1" evidence="4 27 32">
    <location>
        <position position="21"/>
    </location>
</feature>
<feature type="modified residue" description="Phosphoserine; by RPS6KB1" evidence="4 32 34 35">
    <location>
        <position position="22"/>
    </location>
</feature>
<feature type="modified residue" description="Phosphoserine" evidence="35">
    <location>
        <position position="201"/>
    </location>
</feature>
<feature type="modified residue" description="N6-acetyllysine" evidence="33">
    <location>
        <position position="204"/>
    </location>
</feature>
<feature type="modified residue" description="N6-acetyllysine" evidence="33">
    <location>
        <position position="698"/>
    </location>
</feature>
<feature type="cross-link" description="Glycyl lysine isopeptide (Lys-Gly) (interchain with G-Cter in SUMO2)" evidence="36">
    <location>
        <position position="684"/>
    </location>
</feature>
<feature type="mutagenesis site" description="Reduced phosphorylation by RPS6KB1. Abolishes phosphorylation by RPS6KB1; when associated with 21-A-A-22." evidence="4">
    <original>S</original>
    <variation>A</variation>
    <location>
        <position position="7"/>
    </location>
</feature>
<feature type="mutagenesis site" description="Abolishes nuclear localization and phosphorylation by RPS6KB1." evidence="4">
    <original>KR</original>
    <variation>AA</variation>
    <location>
        <begin position="17"/>
        <end position="18"/>
    </location>
</feature>
<feature type="mutagenesis site" description="Reduced phosphorylation by RPS6KB1. Abolishes phosphorylation by RPS6KB1; when associated with A-7." evidence="4">
    <original>TS</original>
    <variation>A</variation>
    <location>
        <begin position="21"/>
        <end position="22"/>
    </location>
</feature>
<feature type="sequence conflict" description="In Ref. 3; BAG35665." evidence="31" ref="3">
    <original>P</original>
    <variation>S</variation>
    <location>
        <position position="80"/>
    </location>
</feature>
<feature type="sequence conflict" description="In Ref. 4; BAD92470." evidence="31" ref="4">
    <original>E</original>
    <variation>D</variation>
    <location>
        <position position="159"/>
    </location>
</feature>
<feature type="sequence conflict" description="In Ref. 3; BAG35665." evidence="31" ref="3">
    <original>S</original>
    <variation>G</variation>
    <location>
        <position position="674"/>
    </location>
</feature>
<feature type="helix" evidence="39">
    <location>
        <begin position="30"/>
        <end position="36"/>
    </location>
</feature>
<feature type="turn" evidence="39">
    <location>
        <begin position="37"/>
        <end position="39"/>
    </location>
</feature>
<feature type="helix" evidence="39">
    <location>
        <begin position="46"/>
        <end position="59"/>
    </location>
</feature>
<feature type="helix" evidence="39">
    <location>
        <begin position="61"/>
        <end position="78"/>
    </location>
</feature>
<feature type="helix" evidence="39">
    <location>
        <begin position="80"/>
        <end position="82"/>
    </location>
</feature>
<feature type="helix" evidence="39">
    <location>
        <begin position="83"/>
        <end position="94"/>
    </location>
</feature>
<feature type="helix" evidence="39">
    <location>
        <begin position="98"/>
        <end position="117"/>
    </location>
</feature>
<feature type="helix" evidence="39">
    <location>
        <begin position="121"/>
        <end position="136"/>
    </location>
</feature>
<feature type="strand" evidence="41">
    <location>
        <begin position="138"/>
        <end position="140"/>
    </location>
</feature>
<feature type="helix" evidence="39">
    <location>
        <begin position="142"/>
        <end position="154"/>
    </location>
</feature>
<feature type="helix" evidence="39">
    <location>
        <begin position="155"/>
        <end position="157"/>
    </location>
</feature>
<feature type="strand" evidence="43">
    <location>
        <begin position="159"/>
        <end position="161"/>
    </location>
</feature>
<feature type="helix" evidence="39">
    <location>
        <begin position="163"/>
        <end position="174"/>
    </location>
</feature>
<feature type="helix" evidence="39">
    <location>
        <begin position="177"/>
        <end position="204"/>
    </location>
</feature>
<feature type="helix" evidence="39">
    <location>
        <begin position="211"/>
        <end position="214"/>
    </location>
</feature>
<feature type="strand" evidence="37">
    <location>
        <begin position="216"/>
        <end position="218"/>
    </location>
</feature>
<feature type="strand" evidence="38">
    <location>
        <begin position="221"/>
        <end position="223"/>
    </location>
</feature>
<feature type="helix" evidence="39">
    <location>
        <begin position="228"/>
        <end position="241"/>
    </location>
</feature>
<feature type="turn" evidence="39">
    <location>
        <begin position="242"/>
        <end position="244"/>
    </location>
</feature>
<feature type="strand" evidence="42">
    <location>
        <begin position="247"/>
        <end position="249"/>
    </location>
</feature>
<feature type="helix" evidence="39">
    <location>
        <begin position="252"/>
        <end position="256"/>
    </location>
</feature>
<feature type="turn" evidence="39">
    <location>
        <begin position="257"/>
        <end position="259"/>
    </location>
</feature>
<feature type="helix" evidence="39">
    <location>
        <begin position="262"/>
        <end position="264"/>
    </location>
</feature>
<feature type="helix" evidence="39">
    <location>
        <begin position="294"/>
        <end position="296"/>
    </location>
</feature>
<feature type="strand" evidence="41">
    <location>
        <begin position="298"/>
        <end position="301"/>
    </location>
</feature>
<feature type="helix" evidence="39">
    <location>
        <begin position="309"/>
        <end position="325"/>
    </location>
</feature>
<feature type="helix" evidence="39">
    <location>
        <begin position="329"/>
        <end position="337"/>
    </location>
</feature>
<feature type="turn" evidence="44">
    <location>
        <begin position="340"/>
        <end position="344"/>
    </location>
</feature>
<feature type="helix" evidence="39">
    <location>
        <begin position="347"/>
        <end position="359"/>
    </location>
</feature>
<feature type="helix" evidence="39">
    <location>
        <begin position="369"/>
        <end position="382"/>
    </location>
</feature>
<feature type="turn" evidence="39">
    <location>
        <begin position="384"/>
        <end position="386"/>
    </location>
</feature>
<feature type="helix" evidence="39">
    <location>
        <begin position="387"/>
        <end position="400"/>
    </location>
</feature>
<feature type="helix" evidence="39">
    <location>
        <begin position="402"/>
        <end position="404"/>
    </location>
</feature>
<feature type="helix" evidence="39">
    <location>
        <begin position="407"/>
        <end position="421"/>
    </location>
</feature>
<feature type="turn" evidence="39">
    <location>
        <begin position="422"/>
        <end position="426"/>
    </location>
</feature>
<feature type="helix" evidence="39">
    <location>
        <begin position="430"/>
        <end position="436"/>
    </location>
</feature>
<feature type="helix" evidence="39">
    <location>
        <begin position="444"/>
        <end position="458"/>
    </location>
</feature>
<feature type="helix" evidence="39">
    <location>
        <begin position="462"/>
        <end position="468"/>
    </location>
</feature>
<feature type="helix" evidence="39">
    <location>
        <begin position="471"/>
        <end position="476"/>
    </location>
</feature>
<feature type="strand" evidence="37">
    <location>
        <begin position="488"/>
        <end position="490"/>
    </location>
</feature>
<feature type="strand" evidence="37">
    <location>
        <begin position="493"/>
        <end position="495"/>
    </location>
</feature>
<feature type="helix" evidence="39">
    <location>
        <begin position="498"/>
        <end position="509"/>
    </location>
</feature>
<feature type="helix" evidence="39">
    <location>
        <begin position="514"/>
        <end position="520"/>
    </location>
</feature>
<feature type="helix" evidence="39">
    <location>
        <begin position="521"/>
        <end position="523"/>
    </location>
</feature>
<feature type="helix" evidence="39">
    <location>
        <begin position="541"/>
        <end position="554"/>
    </location>
</feature>
<feature type="turn" evidence="40">
    <location>
        <begin position="555"/>
        <end position="557"/>
    </location>
</feature>
<feature type="helix" evidence="39">
    <location>
        <begin position="559"/>
        <end position="568"/>
    </location>
</feature>
<feature type="helix" evidence="39">
    <location>
        <begin position="570"/>
        <end position="576"/>
    </location>
</feature>
<feature type="helix" evidence="39">
    <location>
        <begin position="580"/>
        <end position="594"/>
    </location>
</feature>
<feature type="helix" evidence="39">
    <location>
        <begin position="598"/>
        <end position="610"/>
    </location>
</feature>
<feature type="helix" evidence="39">
    <location>
        <begin position="616"/>
        <end position="623"/>
    </location>
</feature>
<feature type="helix" evidence="39">
    <location>
        <begin position="626"/>
        <end position="628"/>
    </location>
</feature>
<feature type="turn" evidence="39">
    <location>
        <begin position="629"/>
        <end position="633"/>
    </location>
</feature>
<feature type="helix" evidence="39">
    <location>
        <begin position="635"/>
        <end position="661"/>
    </location>
</feature>
<feature type="helix" evidence="39">
    <location>
        <begin position="693"/>
        <end position="731"/>
    </location>
</feature>
<feature type="helix" evidence="39">
    <location>
        <begin position="738"/>
        <end position="753"/>
    </location>
</feature>
<feature type="helix" evidence="39">
    <location>
        <begin position="755"/>
        <end position="758"/>
    </location>
</feature>
<feature type="helix" evidence="39">
    <location>
        <begin position="759"/>
        <end position="761"/>
    </location>
</feature>
<feature type="helix" evidence="39">
    <location>
        <begin position="762"/>
        <end position="768"/>
    </location>
</feature>
<feature type="helix" evidence="39">
    <location>
        <begin position="776"/>
        <end position="787"/>
    </location>
</feature>
<gene>
    <name type="primary">NCBP1</name>
    <name type="synonym">CBP80</name>
    <name type="synonym">NCBP</name>
</gene>
<reference key="1">
    <citation type="journal article" date="1994" name="Cell">
        <title>A nuclear cap binding protein complex involved in pre-mRNA splicing.</title>
        <authorList>
            <person name="Izaurralde E."/>
            <person name="Lewis J."/>
            <person name="McGuigan C."/>
            <person name="Jankowska E."/>
            <person name="Darzynkiewicz E."/>
            <person name="Mattaj I.W."/>
        </authorList>
    </citation>
    <scope>NUCLEOTIDE SEQUENCE [MRNA]</scope>
    <scope>PROTEIN SEQUENCE OF 119-128; 513-522 AND 687-693</scope>
    <scope>FUNCTION IN MRNA SPLICING</scope>
</reference>
<reference key="2">
    <citation type="journal article" date="1994" name="Nucleic Acids Res.">
        <title>Cloning of a complementary DNA encoding an 80 kilodalton nuclear cap binding protein.</title>
        <authorList>
            <person name="Kataoka N."/>
            <person name="Ohno M."/>
            <person name="Kangawa K."/>
            <person name="Tokoro Y."/>
            <person name="Shimura Y."/>
        </authorList>
    </citation>
    <scope>NUCLEOTIDE SEQUENCE [MRNA]</scope>
    <scope>PARTIAL PROTEIN SEQUENCE</scope>
</reference>
<reference key="3">
    <citation type="journal article" date="2004" name="Nat. Genet.">
        <title>Complete sequencing and characterization of 21,243 full-length human cDNAs.</title>
        <authorList>
            <person name="Ota T."/>
            <person name="Suzuki Y."/>
            <person name="Nishikawa T."/>
            <person name="Otsuki T."/>
            <person name="Sugiyama T."/>
            <person name="Irie R."/>
            <person name="Wakamatsu A."/>
            <person name="Hayashi K."/>
            <person name="Sato H."/>
            <person name="Nagai K."/>
            <person name="Kimura K."/>
            <person name="Makita H."/>
            <person name="Sekine M."/>
            <person name="Obayashi M."/>
            <person name="Nishi T."/>
            <person name="Shibahara T."/>
            <person name="Tanaka T."/>
            <person name="Ishii S."/>
            <person name="Yamamoto J."/>
            <person name="Saito K."/>
            <person name="Kawai Y."/>
            <person name="Isono Y."/>
            <person name="Nakamura Y."/>
            <person name="Nagahari K."/>
            <person name="Murakami K."/>
            <person name="Yasuda T."/>
            <person name="Iwayanagi T."/>
            <person name="Wagatsuma M."/>
            <person name="Shiratori A."/>
            <person name="Sudo H."/>
            <person name="Hosoiri T."/>
            <person name="Kaku Y."/>
            <person name="Kodaira H."/>
            <person name="Kondo H."/>
            <person name="Sugawara M."/>
            <person name="Takahashi M."/>
            <person name="Kanda K."/>
            <person name="Yokoi T."/>
            <person name="Furuya T."/>
            <person name="Kikkawa E."/>
            <person name="Omura Y."/>
            <person name="Abe K."/>
            <person name="Kamihara K."/>
            <person name="Katsuta N."/>
            <person name="Sato K."/>
            <person name="Tanikawa M."/>
            <person name="Yamazaki M."/>
            <person name="Ninomiya K."/>
            <person name="Ishibashi T."/>
            <person name="Yamashita H."/>
            <person name="Murakawa K."/>
            <person name="Fujimori K."/>
            <person name="Tanai H."/>
            <person name="Kimata M."/>
            <person name="Watanabe M."/>
            <person name="Hiraoka S."/>
            <person name="Chiba Y."/>
            <person name="Ishida S."/>
            <person name="Ono Y."/>
            <person name="Takiguchi S."/>
            <person name="Watanabe S."/>
            <person name="Yosida M."/>
            <person name="Hotuta T."/>
            <person name="Kusano J."/>
            <person name="Kanehori K."/>
            <person name="Takahashi-Fujii A."/>
            <person name="Hara H."/>
            <person name="Tanase T.-O."/>
            <person name="Nomura Y."/>
            <person name="Togiya S."/>
            <person name="Komai F."/>
            <person name="Hara R."/>
            <person name="Takeuchi K."/>
            <person name="Arita M."/>
            <person name="Imose N."/>
            <person name="Musashino K."/>
            <person name="Yuuki H."/>
            <person name="Oshima A."/>
            <person name="Sasaki N."/>
            <person name="Aotsuka S."/>
            <person name="Yoshikawa Y."/>
            <person name="Matsunawa H."/>
            <person name="Ichihara T."/>
            <person name="Shiohata N."/>
            <person name="Sano S."/>
            <person name="Moriya S."/>
            <person name="Momiyama H."/>
            <person name="Satoh N."/>
            <person name="Takami S."/>
            <person name="Terashima Y."/>
            <person name="Suzuki O."/>
            <person name="Nakagawa S."/>
            <person name="Senoh A."/>
            <person name="Mizoguchi H."/>
            <person name="Goto Y."/>
            <person name="Shimizu F."/>
            <person name="Wakebe H."/>
            <person name="Hishigaki H."/>
            <person name="Watanabe T."/>
            <person name="Sugiyama A."/>
            <person name="Takemoto M."/>
            <person name="Kawakami B."/>
            <person name="Yamazaki M."/>
            <person name="Watanabe K."/>
            <person name="Kumagai A."/>
            <person name="Itakura S."/>
            <person name="Fukuzumi Y."/>
            <person name="Fujimori Y."/>
            <person name="Komiyama M."/>
            <person name="Tashiro H."/>
            <person name="Tanigami A."/>
            <person name="Fujiwara T."/>
            <person name="Ono T."/>
            <person name="Yamada K."/>
            <person name="Fujii Y."/>
            <person name="Ozaki K."/>
            <person name="Hirao M."/>
            <person name="Ohmori Y."/>
            <person name="Kawabata A."/>
            <person name="Hikiji T."/>
            <person name="Kobatake N."/>
            <person name="Inagaki H."/>
            <person name="Ikema Y."/>
            <person name="Okamoto S."/>
            <person name="Okitani R."/>
            <person name="Kawakami T."/>
            <person name="Noguchi S."/>
            <person name="Itoh T."/>
            <person name="Shigeta K."/>
            <person name="Senba T."/>
            <person name="Matsumura K."/>
            <person name="Nakajima Y."/>
            <person name="Mizuno T."/>
            <person name="Morinaga M."/>
            <person name="Sasaki M."/>
            <person name="Togashi T."/>
            <person name="Oyama M."/>
            <person name="Hata H."/>
            <person name="Watanabe M."/>
            <person name="Komatsu T."/>
            <person name="Mizushima-Sugano J."/>
            <person name="Satoh T."/>
            <person name="Shirai Y."/>
            <person name="Takahashi Y."/>
            <person name="Nakagawa K."/>
            <person name="Okumura K."/>
            <person name="Nagase T."/>
            <person name="Nomura N."/>
            <person name="Kikuchi H."/>
            <person name="Masuho Y."/>
            <person name="Yamashita R."/>
            <person name="Nakai K."/>
            <person name="Yada T."/>
            <person name="Nakamura Y."/>
            <person name="Ohara O."/>
            <person name="Isogai T."/>
            <person name="Sugano S."/>
        </authorList>
    </citation>
    <scope>NUCLEOTIDE SEQUENCE [LARGE SCALE MRNA]</scope>
    <source>
        <tissue>Testis</tissue>
    </source>
</reference>
<reference key="4">
    <citation type="submission" date="2005-03" db="EMBL/GenBank/DDBJ databases">
        <authorList>
            <person name="Totoki Y."/>
            <person name="Toyoda A."/>
            <person name="Takeda T."/>
            <person name="Sakaki Y."/>
            <person name="Tanaka A."/>
            <person name="Yokoyama S."/>
            <person name="Ohara O."/>
            <person name="Nagase T."/>
            <person name="Kikuno R.F."/>
        </authorList>
    </citation>
    <scope>NUCLEOTIDE SEQUENCE [LARGE SCALE MRNA]</scope>
    <source>
        <tissue>Brain</tissue>
    </source>
</reference>
<reference key="5">
    <citation type="journal article" date="2004" name="Nature">
        <title>DNA sequence and analysis of human chromosome 9.</title>
        <authorList>
            <person name="Humphray S.J."/>
            <person name="Oliver K."/>
            <person name="Hunt A.R."/>
            <person name="Plumb R.W."/>
            <person name="Loveland J.E."/>
            <person name="Howe K.L."/>
            <person name="Andrews T.D."/>
            <person name="Searle S."/>
            <person name="Hunt S.E."/>
            <person name="Scott C.E."/>
            <person name="Jones M.C."/>
            <person name="Ainscough R."/>
            <person name="Almeida J.P."/>
            <person name="Ambrose K.D."/>
            <person name="Ashwell R.I.S."/>
            <person name="Babbage A.K."/>
            <person name="Babbage S."/>
            <person name="Bagguley C.L."/>
            <person name="Bailey J."/>
            <person name="Banerjee R."/>
            <person name="Barker D.J."/>
            <person name="Barlow K.F."/>
            <person name="Bates K."/>
            <person name="Beasley H."/>
            <person name="Beasley O."/>
            <person name="Bird C.P."/>
            <person name="Bray-Allen S."/>
            <person name="Brown A.J."/>
            <person name="Brown J.Y."/>
            <person name="Burford D."/>
            <person name="Burrill W."/>
            <person name="Burton J."/>
            <person name="Carder C."/>
            <person name="Carter N.P."/>
            <person name="Chapman J.C."/>
            <person name="Chen Y."/>
            <person name="Clarke G."/>
            <person name="Clark S.Y."/>
            <person name="Clee C.M."/>
            <person name="Clegg S."/>
            <person name="Collier R.E."/>
            <person name="Corby N."/>
            <person name="Crosier M."/>
            <person name="Cummings A.T."/>
            <person name="Davies J."/>
            <person name="Dhami P."/>
            <person name="Dunn M."/>
            <person name="Dutta I."/>
            <person name="Dyer L.W."/>
            <person name="Earthrowl M.E."/>
            <person name="Faulkner L."/>
            <person name="Fleming C.J."/>
            <person name="Frankish A."/>
            <person name="Frankland J.A."/>
            <person name="French L."/>
            <person name="Fricker D.G."/>
            <person name="Garner P."/>
            <person name="Garnett J."/>
            <person name="Ghori J."/>
            <person name="Gilbert J.G.R."/>
            <person name="Glison C."/>
            <person name="Grafham D.V."/>
            <person name="Gribble S."/>
            <person name="Griffiths C."/>
            <person name="Griffiths-Jones S."/>
            <person name="Grocock R."/>
            <person name="Guy J."/>
            <person name="Hall R.E."/>
            <person name="Hammond S."/>
            <person name="Harley J.L."/>
            <person name="Harrison E.S.I."/>
            <person name="Hart E.A."/>
            <person name="Heath P.D."/>
            <person name="Henderson C.D."/>
            <person name="Hopkins B.L."/>
            <person name="Howard P.J."/>
            <person name="Howden P.J."/>
            <person name="Huckle E."/>
            <person name="Johnson C."/>
            <person name="Johnson D."/>
            <person name="Joy A.A."/>
            <person name="Kay M."/>
            <person name="Keenan S."/>
            <person name="Kershaw J.K."/>
            <person name="Kimberley A.M."/>
            <person name="King A."/>
            <person name="Knights A."/>
            <person name="Laird G.K."/>
            <person name="Langford C."/>
            <person name="Lawlor S."/>
            <person name="Leongamornlert D.A."/>
            <person name="Leversha M."/>
            <person name="Lloyd C."/>
            <person name="Lloyd D.M."/>
            <person name="Lovell J."/>
            <person name="Martin S."/>
            <person name="Mashreghi-Mohammadi M."/>
            <person name="Matthews L."/>
            <person name="McLaren S."/>
            <person name="McLay K.E."/>
            <person name="McMurray A."/>
            <person name="Milne S."/>
            <person name="Nickerson T."/>
            <person name="Nisbett J."/>
            <person name="Nordsiek G."/>
            <person name="Pearce A.V."/>
            <person name="Peck A.I."/>
            <person name="Porter K.M."/>
            <person name="Pandian R."/>
            <person name="Pelan S."/>
            <person name="Phillimore B."/>
            <person name="Povey S."/>
            <person name="Ramsey Y."/>
            <person name="Rand V."/>
            <person name="Scharfe M."/>
            <person name="Sehra H.K."/>
            <person name="Shownkeen R."/>
            <person name="Sims S.K."/>
            <person name="Skuce C.D."/>
            <person name="Smith M."/>
            <person name="Steward C.A."/>
            <person name="Swarbreck D."/>
            <person name="Sycamore N."/>
            <person name="Tester J."/>
            <person name="Thorpe A."/>
            <person name="Tracey A."/>
            <person name="Tromans A."/>
            <person name="Thomas D.W."/>
            <person name="Wall M."/>
            <person name="Wallis J.M."/>
            <person name="West A.P."/>
            <person name="Whitehead S.L."/>
            <person name="Willey D.L."/>
            <person name="Williams S.A."/>
            <person name="Wilming L."/>
            <person name="Wray P.W."/>
            <person name="Young L."/>
            <person name="Ashurst J.L."/>
            <person name="Coulson A."/>
            <person name="Blocker H."/>
            <person name="Durbin R.M."/>
            <person name="Sulston J.E."/>
            <person name="Hubbard T."/>
            <person name="Jackson M.J."/>
            <person name="Bentley D.R."/>
            <person name="Beck S."/>
            <person name="Rogers J."/>
            <person name="Dunham I."/>
        </authorList>
    </citation>
    <scope>NUCLEOTIDE SEQUENCE [LARGE SCALE GENOMIC DNA]</scope>
</reference>
<reference key="6">
    <citation type="journal article" date="2004" name="Genome Res.">
        <title>The status, quality, and expansion of the NIH full-length cDNA project: the Mammalian Gene Collection (MGC).</title>
        <authorList>
            <consortium name="The MGC Project Team"/>
        </authorList>
    </citation>
    <scope>NUCLEOTIDE SEQUENCE [LARGE SCALE MRNA]</scope>
    <source>
        <tissue>Placenta</tissue>
    </source>
</reference>
<reference key="7">
    <citation type="journal article" date="1995" name="Nature">
        <title>A cap-binding protein complex mediating U snRNA export.</title>
        <authorList>
            <person name="Izaurralde E."/>
            <person name="Lewis J."/>
            <person name="Gamberi C."/>
            <person name="Jarmolowski A."/>
            <person name="McGuigan C."/>
            <person name="Mattaj A.W."/>
        </authorList>
    </citation>
    <scope>FUNCTION</scope>
</reference>
<reference key="8">
    <citation type="journal article" date="1997" name="Mol. Cell. Biol.">
        <title>Interaction between the human nuclear cap-binding protein complex and hnRNP F.</title>
        <authorList>
            <person name="Gamberi C."/>
            <person name="Izaurralde E."/>
            <person name="Beisel C."/>
            <person name="Mattaj I.W."/>
        </authorList>
    </citation>
    <scope>INTERACTION WITH HNRNPF AND HNRNPH1</scope>
</reference>
<reference key="9">
    <citation type="journal article" date="2000" name="J. Biol. Chem.">
        <title>Cdc42 stimulates RNA splicing via the S6 kinase and a novel S6 kinase target, the nuclear cap-binding complex.</title>
        <authorList>
            <person name="Wilson K.F."/>
            <person name="Wu W.J."/>
            <person name="Cerione R.A."/>
        </authorList>
    </citation>
    <scope>PHOSPHORYLATION AT SER-7; THR-21 AND SER-22</scope>
    <scope>MUTAGENESIS OF SER-7; 17-LYS-ARG-18 AND 21-THR-SER-22</scope>
</reference>
<reference key="10">
    <citation type="journal article" date="2001" name="Cell">
        <title>Evidence for a pioneer round of mRNA translation: mRNAs subject to nonsense-mediated decay in mammalian cells are bound by CBP80 and CBP20.</title>
        <authorList>
            <person name="Ishigaki Y."/>
            <person name="Li X."/>
            <person name="Serin G."/>
            <person name="Maquat L.E."/>
        </authorList>
    </citation>
    <scope>FUNCTION IN PIONEER ROUND OF MRNA TRANSLATION</scope>
</reference>
<reference key="11">
    <citation type="journal article" date="2001" name="Mol. Cell. Biol.">
        <title>Interaction of eukaryotic translation initiation factor 4G with the nuclear cap-binding complex provides a link between nuclear and cytoplasmic functions of the m(7) guanosine cap.</title>
        <authorList>
            <person name="McKendrick L."/>
            <person name="Thompson E."/>
            <person name="Ferreira J."/>
            <person name="Morley S.J."/>
            <person name="Lewis J.D."/>
        </authorList>
    </citation>
    <scope>INTERACTION WITH EIF4G1</scope>
</reference>
<reference key="12">
    <citation type="journal article" date="2002" name="EMBO J.">
        <title>The exon junction complex is detected on CBP80-bound but not eIF4E-bound mRNA in mammalian cells: dynamics of mRNP remodeling.</title>
        <authorList>
            <person name="Lejeune F."/>
            <person name="Ishigaki Y."/>
            <person name="Li X."/>
            <person name="Maquat L.E."/>
        </authorList>
    </citation>
    <scope>FUNCTION</scope>
</reference>
<reference key="13">
    <citation type="journal article" date="2004" name="Genes Dev.">
        <title>The pioneer translation initiation complex is functionally distinct from but structurally overlaps with the steady-state translation initiation complex.</title>
        <authorList>
            <person name="Chiu S.-Y."/>
            <person name="Lejeune F."/>
            <person name="Ranganathan A.C."/>
            <person name="Maquat L.E."/>
        </authorList>
    </citation>
    <scope>FUNCTION IN PIONEER ROUND OF MRNA TRANSLATION</scope>
    <scope>INTERACTION WITH EIF4G1</scope>
</reference>
<reference key="14">
    <citation type="journal article" date="2004" name="Nat. Struct. Mol. Biol.">
        <title>eIF4G is required for the pioneer round of translation in mammalian cells.</title>
        <authorList>
            <person name="Lejeune F."/>
            <person name="Ranganathan A.C."/>
            <person name="Maquat L.E."/>
        </authorList>
    </citation>
    <scope>FUNCTION IN PIONEER ROUND OF MRNA TRANSLATION</scope>
    <scope>INTERACTION WITH EIF4G1 AND EIF4G2</scope>
</reference>
<reference key="15">
    <citation type="journal article" date="2005" name="Nat. Struct. Mol. Biol.">
        <title>CBP80 promotes interaction of Upf1 with Upf2 during nonsense-mediated mRNA decay in mammalian cells.</title>
        <authorList>
            <person name="Hosoda N."/>
            <person name="Kim Y.K."/>
            <person name="Lejeune F."/>
            <person name="Maquat L.E."/>
        </authorList>
    </citation>
    <scope>FUNCTION IN NONSENSE-MEDIATED MRNA DECAY</scope>
    <scope>INTERACTION WITH UPF1</scope>
</reference>
<reference key="16">
    <citation type="journal article" date="2006" name="Cell">
        <title>Human mRNA export machinery recruited to the 5' end of mRNA.</title>
        <authorList>
            <person name="Cheng H."/>
            <person name="Dufu K."/>
            <person name="Lee C.-S."/>
            <person name="Hsu J.L."/>
            <person name="Dias A."/>
            <person name="Reed R."/>
        </authorList>
    </citation>
    <scope>FUNCTION IN MRNA EXPORT</scope>
    <scope>INTERACTION WITH ALYREF/THOC4</scope>
</reference>
<reference key="17">
    <citation type="journal article" date="2006" name="Cell">
        <title>Global, in vivo, and site-specific phosphorylation dynamics in signaling networks.</title>
        <authorList>
            <person name="Olsen J.V."/>
            <person name="Blagoev B."/>
            <person name="Gnad F."/>
            <person name="Macek B."/>
            <person name="Kumar C."/>
            <person name="Mortensen P."/>
            <person name="Mann M."/>
        </authorList>
    </citation>
    <scope>IDENTIFICATION BY MASS SPECTROMETRY [LARGE SCALE ANALYSIS]</scope>
    <source>
        <tissue>Cervix carcinoma</tissue>
    </source>
</reference>
<reference key="18">
    <citation type="journal article" date="2006" name="J. Biol. Chem.">
        <title>Inhibition of mRNA deadenylation by the nuclear cap binding complex (CBC).</title>
        <authorList>
            <person name="Balatsos N.A.A."/>
            <person name="Nilsson P."/>
            <person name="Mazza C."/>
            <person name="Cusack S."/>
            <person name="Virtanen A."/>
        </authorList>
    </citation>
    <scope>FUNCTION IN MRNA DEADENYLATION</scope>
    <scope>INTERACTION WITH PARN</scope>
</reference>
<reference key="19">
    <citation type="journal article" date="2007" name="Mol. Cell. Proteomics">
        <title>Molecular composition of IMP1 ribonucleoprotein granules.</title>
        <authorList>
            <person name="Joeson L."/>
            <person name="Vikesaa J."/>
            <person name="Krogh A."/>
            <person name="Nielsen L.K."/>
            <person name="Hansen T."/>
            <person name="Borup R."/>
            <person name="Johnsen A.H."/>
            <person name="Christiansen J."/>
            <person name="Nielsen F.C."/>
        </authorList>
    </citation>
    <scope>IDENTIFICATION IN A MRNP GRANULE COMPLEX</scope>
    <scope>INTERACTION WITH IGF2BP1</scope>
    <scope>IDENTIFICATION BY MASS SPECTROMETRY</scope>
    <scope>SUBCELLULAR LOCATION</scope>
</reference>
<reference key="20">
    <citation type="journal article" date="2007" name="Nat. Struct. Mol. Biol.">
        <title>Failsafe nonsense-mediated mRNA decay does not detectably target eIF4E-bound mRNA.</title>
        <authorList>
            <person name="Matsuda D."/>
            <person name="Hosoda N."/>
            <person name="Kim Y.K."/>
            <person name="Maquat L.E."/>
        </authorList>
    </citation>
    <scope>FUNCTION IN NONSENSE-MEDIATED MRNA DECAY</scope>
</reference>
<reference key="21">
    <citation type="journal article" date="2008" name="Cell">
        <title>SKAR links pre-mRNA splicing to mTOR/S6K1-mediated enhanced translation efficiency of spliced mRNAs.</title>
        <authorList>
            <person name="Ma X.M."/>
            <person name="Yoon S.O."/>
            <person name="Richardson C.J."/>
            <person name="Julich K."/>
            <person name="Blenis J."/>
        </authorList>
    </citation>
    <scope>INTERACTION WITH POLDIP3</scope>
</reference>
<reference key="22">
    <citation type="journal article" date="2008" name="EMBO Rep.">
        <title>NMD resulting from encephalomyocarditis virus IRES-directed translation initiation seems to be restricted to CBP80/20-bound mRNA.</title>
        <authorList>
            <person name="Woeller C.F."/>
            <person name="Gaspari M."/>
            <person name="Isken O."/>
            <person name="Maquat L.E."/>
        </authorList>
    </citation>
    <scope>FUNCTION IN NONSENSE-MEDIATED MRNA DECAY</scope>
</reference>
<reference key="23">
    <citation type="journal article" date="2008" name="Mol. Cell">
        <title>Kinase-selective enrichment enables quantitative phosphoproteomics of the kinome across the cell cycle.</title>
        <authorList>
            <person name="Daub H."/>
            <person name="Olsen J.V."/>
            <person name="Bairlein M."/>
            <person name="Gnad F."/>
            <person name="Oppermann F.S."/>
            <person name="Korner R."/>
            <person name="Greff Z."/>
            <person name="Keri G."/>
            <person name="Stemmann O."/>
            <person name="Mann M."/>
        </authorList>
    </citation>
    <scope>IDENTIFICATION BY MASS SPECTROMETRY [LARGE SCALE ANALYSIS]</scope>
    <source>
        <tissue>Cervix carcinoma</tissue>
    </source>
</reference>
<reference key="24">
    <citation type="journal article" date="2008" name="Proc. Natl. Acad. Sci. U.S.A.">
        <title>A quantitative atlas of mitotic phosphorylation.</title>
        <authorList>
            <person name="Dephoure N."/>
            <person name="Zhou C."/>
            <person name="Villen J."/>
            <person name="Beausoleil S.A."/>
            <person name="Bakalarski C.E."/>
            <person name="Elledge S.J."/>
            <person name="Gygi S.P."/>
        </authorList>
    </citation>
    <scope>PHOSPHORYLATION [LARGE SCALE ANALYSIS] AT THR-21 AND SER-22</scope>
    <scope>IDENTIFICATION BY MASS SPECTROMETRY [LARGE SCALE ANALYSIS]</scope>
    <source>
        <tissue>Cervix carcinoma</tissue>
    </source>
</reference>
<reference key="25">
    <citation type="journal article" date="2009" name="Cell">
        <title>Ars2 links the nuclear cap-binding complex to RNA interference and cell proliferation.</title>
        <authorList>
            <person name="Gruber J.J."/>
            <person name="Zatechka D.S."/>
            <person name="Sabin L.R."/>
            <person name="Yong J."/>
            <person name="Lum J.J."/>
            <person name="Kong M."/>
            <person name="Zong W.-X."/>
            <person name="Zhang Z."/>
            <person name="Lau C.-K."/>
            <person name="Rawlings J."/>
            <person name="Cherry S."/>
            <person name="Ihle J.N."/>
            <person name="Dreyfuss G."/>
            <person name="Thompson C.B."/>
        </authorList>
    </citation>
    <scope>FUNCTION IN MIRNAS BIOGENESIS</scope>
</reference>
<reference key="26">
    <citation type="journal article" date="2009" name="Genes Dev.">
        <title>A new MIF4G domain-containing protein, CTIF, directs nuclear cap-binding protein CBP80/20-dependent translation.</title>
        <authorList>
            <person name="Kim K.M."/>
            <person name="Cho H."/>
            <person name="Choi K."/>
            <person name="Kim J."/>
            <person name="Kim B.-W."/>
            <person name="Ko Y.-G."/>
            <person name="Jang S.K."/>
            <person name="Kim Y.K."/>
        </authorList>
    </citation>
    <scope>FUNCTION IN PIONEER ROUND OF MRNA TRANSLATION</scope>
    <scope>INTERACTION WITH KIAA0427</scope>
    <scope>SUBCELLULAR LOCATION</scope>
</reference>
<reference key="27">
    <citation type="journal article" date="2009" name="Sci. Signal.">
        <title>Quantitative phosphoproteomic analysis of T cell receptor signaling reveals system-wide modulation of protein-protein interactions.</title>
        <authorList>
            <person name="Mayya V."/>
            <person name="Lundgren D.H."/>
            <person name="Hwang S.-I."/>
            <person name="Rezaul K."/>
            <person name="Wu L."/>
            <person name="Eng J.K."/>
            <person name="Rodionov V."/>
            <person name="Han D.K."/>
        </authorList>
    </citation>
    <scope>PHOSPHORYLATION [LARGE SCALE ANALYSIS] AT SER-22</scope>
    <scope>IDENTIFICATION BY MASS SPECTROMETRY [LARGE SCALE ANALYSIS]</scope>
    <source>
        <tissue>Leukemic T-cell</tissue>
    </source>
</reference>
<reference key="28">
    <citation type="journal article" date="2009" name="Science">
        <title>Lysine acetylation targets protein complexes and co-regulates major cellular functions.</title>
        <authorList>
            <person name="Choudhary C."/>
            <person name="Kumar C."/>
            <person name="Gnad F."/>
            <person name="Nielsen M.L."/>
            <person name="Rehman M."/>
            <person name="Walther T.C."/>
            <person name="Olsen J.V."/>
            <person name="Mann M."/>
        </authorList>
    </citation>
    <scope>ACETYLATION [LARGE SCALE ANALYSIS] AT LYS-204 AND LYS-698</scope>
    <scope>IDENTIFICATION BY MASS SPECTROMETRY [LARGE SCALE ANALYSIS]</scope>
</reference>
<reference key="29">
    <citation type="journal article" date="2010" name="Sci. Signal.">
        <title>Quantitative phosphoproteomics reveals widespread full phosphorylation site occupancy during mitosis.</title>
        <authorList>
            <person name="Olsen J.V."/>
            <person name="Vermeulen M."/>
            <person name="Santamaria A."/>
            <person name="Kumar C."/>
            <person name="Miller M.L."/>
            <person name="Jensen L.J."/>
            <person name="Gnad F."/>
            <person name="Cox J."/>
            <person name="Jensen T.S."/>
            <person name="Nigg E.A."/>
            <person name="Brunak S."/>
            <person name="Mann M."/>
        </authorList>
    </citation>
    <scope>IDENTIFICATION BY MASS SPECTROMETRY [LARGE SCALE ANALYSIS]</scope>
    <source>
        <tissue>Cervix carcinoma</tissue>
    </source>
</reference>
<reference key="30">
    <citation type="journal article" date="2011" name="BMC Syst. Biol.">
        <title>Initial characterization of the human central proteome.</title>
        <authorList>
            <person name="Burkard T.R."/>
            <person name="Planyavsky M."/>
            <person name="Kaupe I."/>
            <person name="Breitwieser F.P."/>
            <person name="Buerckstuemmer T."/>
            <person name="Bennett K.L."/>
            <person name="Superti-Furga G."/>
            <person name="Colinge J."/>
        </authorList>
    </citation>
    <scope>IDENTIFICATION BY MASS SPECTROMETRY [LARGE SCALE ANALYSIS]</scope>
</reference>
<reference key="31">
    <citation type="journal article" date="2011" name="Sci. Signal.">
        <title>System-wide temporal characterization of the proteome and phosphoproteome of human embryonic stem cell differentiation.</title>
        <authorList>
            <person name="Rigbolt K.T."/>
            <person name="Prokhorova T.A."/>
            <person name="Akimov V."/>
            <person name="Henningsen J."/>
            <person name="Johansen P.T."/>
            <person name="Kratchmarova I."/>
            <person name="Kassem M."/>
            <person name="Mann M."/>
            <person name="Olsen J.V."/>
            <person name="Blagoev B."/>
        </authorList>
    </citation>
    <scope>IDENTIFICATION BY MASS SPECTROMETRY [LARGE SCALE ANALYSIS]</scope>
</reference>
<reference key="32">
    <citation type="journal article" date="2013" name="J. Proteome Res.">
        <title>Toward a comprehensive characterization of a human cancer cell phosphoproteome.</title>
        <authorList>
            <person name="Zhou H."/>
            <person name="Di Palma S."/>
            <person name="Preisinger C."/>
            <person name="Peng M."/>
            <person name="Polat A.N."/>
            <person name="Heck A.J."/>
            <person name="Mohammed S."/>
        </authorList>
    </citation>
    <scope>PHOSPHORYLATION [LARGE SCALE ANALYSIS] AT SER-22 AND SER-201</scope>
    <scope>IDENTIFICATION BY MASS SPECTROMETRY [LARGE SCALE ANALYSIS]</scope>
    <source>
        <tissue>Cervix carcinoma</tissue>
        <tissue>Erythroleukemia</tissue>
    </source>
</reference>
<reference key="33">
    <citation type="journal article" date="2014" name="Cell Rep.">
        <title>The RNA helicase DHX34 activates NMD by promoting a transition from the surveillance to the decay-inducing complex.</title>
        <authorList>
            <person name="Hug N."/>
            <person name="Caceres J.F."/>
        </authorList>
    </citation>
    <scope>INTERACTION WITH DHX34</scope>
</reference>
<reference key="34">
    <citation type="journal article" date="2014" name="J. Proteomics">
        <title>An enzyme assisted RP-RPLC approach for in-depth analysis of human liver phosphoproteome.</title>
        <authorList>
            <person name="Bian Y."/>
            <person name="Song C."/>
            <person name="Cheng K."/>
            <person name="Dong M."/>
            <person name="Wang F."/>
            <person name="Huang J."/>
            <person name="Sun D."/>
            <person name="Wang L."/>
            <person name="Ye M."/>
            <person name="Zou H."/>
        </authorList>
    </citation>
    <scope>IDENTIFICATION BY MASS SPECTROMETRY [LARGE SCALE ANALYSIS]</scope>
    <source>
        <tissue>Liver</tissue>
    </source>
</reference>
<reference key="35">
    <citation type="journal article" date="2015" name="Nat. Commun.">
        <title>mRNA export through an additional cap-binding complex consisting of NCBP1 and NCBP3.</title>
        <authorList>
            <person name="Gebhardt A."/>
            <person name="Habjan M."/>
            <person name="Benda C."/>
            <person name="Meiler A."/>
            <person name="Haas D.A."/>
            <person name="Hein M.Y."/>
            <person name="Mann A."/>
            <person name="Mann M."/>
            <person name="Habermann B."/>
            <person name="Pichlmair A."/>
        </authorList>
    </citation>
    <scope>FUNCTION</scope>
    <scope>INTERACTION WITH NCBP3</scope>
    <scope>IDENTIFICATION BY MASS SPECTROMETRY</scope>
</reference>
<reference key="36">
    <citation type="journal article" date="2016" name="Mol. Cell">
        <title>The m(6)A methyltransferase METTL3 promotes translation in human cancer cells.</title>
        <authorList>
            <person name="Lin S."/>
            <person name="Choe J."/>
            <person name="Du P."/>
            <person name="Triboulet R."/>
            <person name="Gregory R.I."/>
        </authorList>
    </citation>
    <scope>INTERACTION WITH METTL3</scope>
</reference>
<reference key="37">
    <citation type="journal article" date="2016" name="Mol. Cell">
        <title>Identification of a nuclear exosome decay pathway for processed transcripts.</title>
        <authorList>
            <person name="Meola N."/>
            <person name="Domanski M."/>
            <person name="Karadoulama E."/>
            <person name="Chen Y."/>
            <person name="Gentil C."/>
            <person name="Pultz D."/>
            <person name="Vitting-Seerup K."/>
            <person name="Lykke-Andersen S."/>
            <person name="Andersen J.S."/>
            <person name="Sandelin A."/>
            <person name="Jensen T.H."/>
        </authorList>
    </citation>
    <scope>INTERACTION WITH ZFC3H1</scope>
</reference>
<reference key="38">
    <citation type="journal article" date="2017" name="Nat. Struct. Mol. Biol.">
        <title>Site-specific mapping of the human SUMO proteome reveals co-modification with phosphorylation.</title>
        <authorList>
            <person name="Hendriks I.A."/>
            <person name="Lyon D."/>
            <person name="Young C."/>
            <person name="Jensen L.J."/>
            <person name="Vertegaal A.C."/>
            <person name="Nielsen M.L."/>
        </authorList>
    </citation>
    <scope>SUMOYLATION [LARGE SCALE ANALYSIS] AT LYS-684</scope>
    <scope>IDENTIFICATION BY MASS SPECTROMETRY [LARGE SCALE ANALYSIS]</scope>
</reference>
<reference key="39">
    <citation type="journal article" date="2019" name="Genes Dev.">
        <title>NRDE2 negatively regulates exosome functions by inhibiting MTR4 recruitment and exosome interaction.</title>
        <authorList>
            <person name="Wang J."/>
            <person name="Chen J."/>
            <person name="Wu G."/>
            <person name="Zhang H."/>
            <person name="Du X."/>
            <person name="Chen S."/>
            <person name="Zhang L."/>
            <person name="Wang K."/>
            <person name="Fan J."/>
            <person name="Gao S."/>
            <person name="Wu X."/>
            <person name="Zhang S."/>
            <person name="Kuai B."/>
            <person name="Zhao P."/>
            <person name="Chi B."/>
            <person name="Wang L."/>
            <person name="Li G."/>
            <person name="Wong C.C.L."/>
            <person name="Zhou Y."/>
            <person name="Li J."/>
            <person name="Yun C."/>
            <person name="Cheng H."/>
        </authorList>
    </citation>
    <scope>INTERACTION WITH MTREX</scope>
</reference>
<reference key="40">
    <citation type="journal article" date="2021" name="Ann. Neurol.">
        <title>Dominant KPNA3 Mutations Cause Infantile-Onset Hereditary Spastic Paraplegia.</title>
        <authorList>
            <person name="Schob C."/>
            <person name="Hempel M."/>
            <person name="Safka Brozkova D."/>
            <person name="Jiang H."/>
            <person name="Kim S.Y."/>
            <person name="Batzir N.A."/>
            <person name="Orenstein N."/>
            <person name="Bierhals T."/>
            <person name="Johannsen J."/>
            <person name="Uhrova Meszarosova A."/>
            <person name="Chae J.H."/>
            <person name="Seeman P."/>
            <person name="Woidy M."/>
            <person name="Fang F."/>
            <person name="Kubisch C."/>
            <person name="Kindler S."/>
            <person name="Denecke J."/>
        </authorList>
    </citation>
    <scope>INTERACTION WITH KPNA3</scope>
</reference>
<reference key="41">
    <citation type="journal article" date="2024" name="Mol. Cell">
        <title>The PNUTS phosphatase complex controls transcription pause release.</title>
        <authorList>
            <person name="Kelley J.R."/>
            <person name="Dimitrova E."/>
            <person name="Maciuszek M."/>
            <person name="Nguyen H.T."/>
            <person name="Szczurek A.T."/>
            <person name="Hughes A.L."/>
            <person name="Blackledge N.P."/>
            <person name="Kettenbach A.N."/>
            <person name="Klose R.J."/>
        </authorList>
    </citation>
    <scope>PHOSPHORYLATION AT THR-21</scope>
    <scope>DEPHOSPHORYLATION AT THR-21</scope>
</reference>
<reference key="42">
    <citation type="journal article" date="2001" name="Mol. Cell">
        <title>Crystal structure of the human nuclear cap binding complex.</title>
        <authorList>
            <person name="Mazza C."/>
            <person name="Ohno M."/>
            <person name="Segref A."/>
            <person name="Mattaj I.W."/>
            <person name="Cusack S."/>
        </authorList>
    </citation>
    <scope>X-RAY CRYSTALLOGRAPHY (2.0 ANGSTROMS) OF 20-790 IN COMPLEX WITH NCBP2</scope>
</reference>
<reference key="43">
    <citation type="journal article" date="2002" name="EMBO J.">
        <title>Large-scale induced fit recognition of an m(7)GpppG cap analogue by the human nuclear cap-binding complex.</title>
        <authorList>
            <person name="Mazza C."/>
            <person name="Segref A."/>
            <person name="Mattaj I.W."/>
            <person name="Cusack S."/>
        </authorList>
    </citation>
    <scope>X-RAY CRYSTALLOGRAPHY (2.15 ANGSTROMS) OF 20-790 IN COMPLEX WITH NCBP2</scope>
</reference>
<reference key="44">
    <citation type="journal article" date="2002" name="Nat. Struct. Biol.">
        <title>Structural basis of m7GpppG binding to the nuclear cap-binding protein complex.</title>
        <authorList>
            <person name="Calero G."/>
            <person name="Wilson K.F."/>
            <person name="Ly T."/>
            <person name="Rios-Steiner J.L."/>
            <person name="Clardy J.C."/>
            <person name="Cerione R.A."/>
        </authorList>
    </citation>
    <scope>X-RAY CRYSTALLOGRAPHY (2.11 ANGSTROMS) IN COMPLEX WITH NCBP2</scope>
</reference>